<reference key="1">
    <citation type="journal article" date="2004" name="Nature">
        <title>Genome evolution in yeasts.</title>
        <authorList>
            <person name="Dujon B."/>
            <person name="Sherman D."/>
            <person name="Fischer G."/>
            <person name="Durrens P."/>
            <person name="Casaregola S."/>
            <person name="Lafontaine I."/>
            <person name="de Montigny J."/>
            <person name="Marck C."/>
            <person name="Neuveglise C."/>
            <person name="Talla E."/>
            <person name="Goffard N."/>
            <person name="Frangeul L."/>
            <person name="Aigle M."/>
            <person name="Anthouard V."/>
            <person name="Babour A."/>
            <person name="Barbe V."/>
            <person name="Barnay S."/>
            <person name="Blanchin S."/>
            <person name="Beckerich J.-M."/>
            <person name="Beyne E."/>
            <person name="Bleykasten C."/>
            <person name="Boisrame A."/>
            <person name="Boyer J."/>
            <person name="Cattolico L."/>
            <person name="Confanioleri F."/>
            <person name="de Daruvar A."/>
            <person name="Despons L."/>
            <person name="Fabre E."/>
            <person name="Fairhead C."/>
            <person name="Ferry-Dumazet H."/>
            <person name="Groppi A."/>
            <person name="Hantraye F."/>
            <person name="Hennequin C."/>
            <person name="Jauniaux N."/>
            <person name="Joyet P."/>
            <person name="Kachouri R."/>
            <person name="Kerrest A."/>
            <person name="Koszul R."/>
            <person name="Lemaire M."/>
            <person name="Lesur I."/>
            <person name="Ma L."/>
            <person name="Muller H."/>
            <person name="Nicaud J.-M."/>
            <person name="Nikolski M."/>
            <person name="Oztas S."/>
            <person name="Ozier-Kalogeropoulos O."/>
            <person name="Pellenz S."/>
            <person name="Potier S."/>
            <person name="Richard G.-F."/>
            <person name="Straub M.-L."/>
            <person name="Suleau A."/>
            <person name="Swennen D."/>
            <person name="Tekaia F."/>
            <person name="Wesolowski-Louvel M."/>
            <person name="Westhof E."/>
            <person name="Wirth B."/>
            <person name="Zeniou-Meyer M."/>
            <person name="Zivanovic Y."/>
            <person name="Bolotin-Fukuhara M."/>
            <person name="Thierry A."/>
            <person name="Bouchier C."/>
            <person name="Caudron B."/>
            <person name="Scarpelli C."/>
            <person name="Gaillardin C."/>
            <person name="Weissenbach J."/>
            <person name="Wincker P."/>
            <person name="Souciet J.-L."/>
        </authorList>
    </citation>
    <scope>NUCLEOTIDE SEQUENCE [LARGE SCALE GENOMIC DNA]</scope>
    <source>
        <strain>ATCC 8585 / CBS 2359 / DSM 70799 / NBRC 1267 / NRRL Y-1140 / WM37</strain>
    </source>
</reference>
<sequence length="387" mass="43689">MSHRKYEAPRHGHLGFLPRKRAASVRGRVKSFPKDDQTKPVALTSFLGYKAGMSTIVRDLDRPGSKFHKREVVEAVTVVDTPPIVVVGVVGYVETPRGLRSLTTVWAEHLSDEVKRRFYKNWYKSKKKAFTKYSAKYAENGAQVDRELARIKKYASVVRVLVHTQVRKTPLSQKKAHLAEIQLNGGSVSDKVDWAKEHFEKTVAVDSVFEQNEMIDVVAVTKGHGFEGVTHRWGTKKLPRKTHRGLRKVACIGAWHPAHVMWSVARAGQRGYHHRTSINHKVYRVGKGDDEANAATEFDRTKKTITPMGGFVHYGAINNDFVILKGSIPGTRKRVVTLRKSLYTNTSRKALEEVTLKWIDTASKFGKGRFQTPAEKHAFLGTLKKDL</sequence>
<dbReference type="EMBL" id="CR382126">
    <property type="protein sequence ID" value="CAG98530.1"/>
    <property type="molecule type" value="Genomic_DNA"/>
</dbReference>
<dbReference type="RefSeq" id="XP_455822.1">
    <property type="nucleotide sequence ID" value="XM_455822.1"/>
</dbReference>
<dbReference type="PDB" id="5IT7">
    <property type="method" value="EM"/>
    <property type="resolution" value="3.60 A"/>
    <property type="chains" value="BB=2-385"/>
</dbReference>
<dbReference type="PDB" id="6UZ7">
    <property type="method" value="EM"/>
    <property type="resolution" value="3.60 A"/>
    <property type="chains" value="AB=1-387"/>
</dbReference>
<dbReference type="PDBsum" id="5IT7"/>
<dbReference type="PDBsum" id="6UZ7"/>
<dbReference type="EMDB" id="EMD-20952"/>
<dbReference type="EMDB" id="EMD-8123"/>
<dbReference type="SMR" id="Q6CJR7"/>
<dbReference type="FunCoup" id="Q6CJR7">
    <property type="interactions" value="904"/>
</dbReference>
<dbReference type="STRING" id="284590.Q6CJR7"/>
<dbReference type="PaxDb" id="284590-Q6CJR7"/>
<dbReference type="KEGG" id="kla:KLLA0_F16511g"/>
<dbReference type="eggNOG" id="KOG0746">
    <property type="taxonomic scope" value="Eukaryota"/>
</dbReference>
<dbReference type="HOGENOM" id="CLU_033361_2_1_1"/>
<dbReference type="InParanoid" id="Q6CJR7"/>
<dbReference type="OMA" id="QRTEYNK"/>
<dbReference type="Proteomes" id="UP000000598">
    <property type="component" value="Chromosome F"/>
</dbReference>
<dbReference type="GO" id="GO:0022625">
    <property type="term" value="C:cytosolic large ribosomal subunit"/>
    <property type="evidence" value="ECO:0007669"/>
    <property type="project" value="TreeGrafter"/>
</dbReference>
<dbReference type="GO" id="GO:0003723">
    <property type="term" value="F:RNA binding"/>
    <property type="evidence" value="ECO:0007669"/>
    <property type="project" value="TreeGrafter"/>
</dbReference>
<dbReference type="GO" id="GO:0003735">
    <property type="term" value="F:structural constituent of ribosome"/>
    <property type="evidence" value="ECO:0007669"/>
    <property type="project" value="InterPro"/>
</dbReference>
<dbReference type="GO" id="GO:0006412">
    <property type="term" value="P:translation"/>
    <property type="evidence" value="ECO:0007669"/>
    <property type="project" value="InterPro"/>
</dbReference>
<dbReference type="FunFam" id="2.40.30.10:FF:000079">
    <property type="entry name" value="60S ribosomal protein L3"/>
    <property type="match status" value="1"/>
</dbReference>
<dbReference type="FunFam" id="3.30.1430.10:FF:000001">
    <property type="entry name" value="60S ribosomal protein L3"/>
    <property type="match status" value="1"/>
</dbReference>
<dbReference type="FunFam" id="4.10.960.10:FF:000002">
    <property type="entry name" value="60S ribosomal protein L3"/>
    <property type="match status" value="1"/>
</dbReference>
<dbReference type="FunFam" id="2.40.30.10:FF:000351">
    <property type="entry name" value="Ribosomal protein L3"/>
    <property type="match status" value="1"/>
</dbReference>
<dbReference type="Gene3D" id="3.30.1430.10">
    <property type="match status" value="1"/>
</dbReference>
<dbReference type="Gene3D" id="4.10.960.10">
    <property type="entry name" value="Ribosomal protein L3, domain 3"/>
    <property type="match status" value="1"/>
</dbReference>
<dbReference type="Gene3D" id="2.40.30.10">
    <property type="entry name" value="Translation factors"/>
    <property type="match status" value="1"/>
</dbReference>
<dbReference type="InterPro" id="IPR045077">
    <property type="entry name" value="L3_arc_euk"/>
</dbReference>
<dbReference type="InterPro" id="IPR044892">
    <property type="entry name" value="Ribosomal_L3_dom_3_arc_sf"/>
</dbReference>
<dbReference type="InterPro" id="IPR000597">
    <property type="entry name" value="Ribosomal_uL3"/>
</dbReference>
<dbReference type="InterPro" id="IPR019926">
    <property type="entry name" value="Ribosomal_uL3_CS"/>
</dbReference>
<dbReference type="InterPro" id="IPR009000">
    <property type="entry name" value="Transl_B-barrel_sf"/>
</dbReference>
<dbReference type="PANTHER" id="PTHR11363">
    <property type="entry name" value="60S RIBOSOMAL PROTEIN L3-RELATED"/>
    <property type="match status" value="1"/>
</dbReference>
<dbReference type="PANTHER" id="PTHR11363:SF5">
    <property type="entry name" value="LARGE RIBOSOMAL SUBUNIT PROTEIN UL3"/>
    <property type="match status" value="1"/>
</dbReference>
<dbReference type="Pfam" id="PF00297">
    <property type="entry name" value="Ribosomal_L3"/>
    <property type="match status" value="1"/>
</dbReference>
<dbReference type="SUPFAM" id="SSF50447">
    <property type="entry name" value="Translation proteins"/>
    <property type="match status" value="1"/>
</dbReference>
<dbReference type="PROSITE" id="PS00474">
    <property type="entry name" value="RIBOSOMAL_L3"/>
    <property type="match status" value="1"/>
</dbReference>
<comment type="subcellular location">
    <subcellularLocation>
        <location evidence="1">Cytoplasm</location>
    </subcellularLocation>
</comment>
<comment type="similarity">
    <text evidence="2">Belongs to the universal ribosomal protein uL3 family.</text>
</comment>
<organism>
    <name type="scientific">Kluyveromyces lactis (strain ATCC 8585 / CBS 2359 / DSM 70799 / NBRC 1267 / NRRL Y-1140 / WM37)</name>
    <name type="common">Yeast</name>
    <name type="synonym">Candida sphaerica</name>
    <dbReference type="NCBI Taxonomy" id="284590"/>
    <lineage>
        <taxon>Eukaryota</taxon>
        <taxon>Fungi</taxon>
        <taxon>Dikarya</taxon>
        <taxon>Ascomycota</taxon>
        <taxon>Saccharomycotina</taxon>
        <taxon>Saccharomycetes</taxon>
        <taxon>Saccharomycetales</taxon>
        <taxon>Saccharomycetaceae</taxon>
        <taxon>Kluyveromyces</taxon>
    </lineage>
</organism>
<evidence type="ECO:0000250" key="1"/>
<evidence type="ECO:0000305" key="2"/>
<keyword id="KW-0002">3D-structure</keyword>
<keyword id="KW-0963">Cytoplasm</keyword>
<keyword id="KW-1185">Reference proteome</keyword>
<keyword id="KW-0687">Ribonucleoprotein</keyword>
<keyword id="KW-0689">Ribosomal protein</keyword>
<name>RL3_KLULA</name>
<gene>
    <name type="primary">RPL3</name>
    <name type="ordered locus">KLLA0F16511g</name>
</gene>
<proteinExistence type="evidence at protein level"/>
<accession>Q6CJR7</accession>
<feature type="chain" id="PRO_0000077247" description="Large ribosomal subunit protein uL3">
    <location>
        <begin position="1"/>
        <end position="387"/>
    </location>
</feature>
<protein>
    <recommendedName>
        <fullName evidence="2">Large ribosomal subunit protein uL3</fullName>
    </recommendedName>
    <alternativeName>
        <fullName>60S ribosomal protein L3</fullName>
    </alternativeName>
</protein>